<protein>
    <recommendedName>
        <fullName evidence="1">Segregation and condensation protein B</fullName>
    </recommendedName>
</protein>
<reference key="1">
    <citation type="journal article" date="2007" name="J. Bacteriol.">
        <title>Genome of the opportunistic pathogen Streptococcus sanguinis.</title>
        <authorList>
            <person name="Xu P."/>
            <person name="Alves J.M."/>
            <person name="Kitten T."/>
            <person name="Brown A."/>
            <person name="Chen Z."/>
            <person name="Ozaki L.S."/>
            <person name="Manque P."/>
            <person name="Ge X."/>
            <person name="Serrano M.G."/>
            <person name="Puiu D."/>
            <person name="Hendricks S."/>
            <person name="Wang Y."/>
            <person name="Chaplin M.D."/>
            <person name="Akan D."/>
            <person name="Paik S."/>
            <person name="Peterson D.L."/>
            <person name="Macrina F.L."/>
            <person name="Buck G.A."/>
        </authorList>
    </citation>
    <scope>NUCLEOTIDE SEQUENCE [LARGE SCALE GENOMIC DNA]</scope>
    <source>
        <strain>SK36</strain>
    </source>
</reference>
<keyword id="KW-0131">Cell cycle</keyword>
<keyword id="KW-0132">Cell division</keyword>
<keyword id="KW-0159">Chromosome partition</keyword>
<keyword id="KW-0963">Cytoplasm</keyword>
<keyword id="KW-1185">Reference proteome</keyword>
<sequence length="189" mass="21152">MSKLAEIEALLFVAGEDGLKVHQLAEILSLPPTGVIQSLEKLAEQYEVNPDSSLTLLETSKTYKLVTKPEFAEILRAYSRAPINQSLSRAALETLSIIAYKQPITRVEIDDIRGVNSSGALAKLLAFELVREDGKKEVIGRPNLYVTTDYFLDYMGINHLDELPIVEETELVAEESQLFIERTDIDENQ</sequence>
<feature type="chain" id="PRO_1000069964" description="Segregation and condensation protein B">
    <location>
        <begin position="1"/>
        <end position="189"/>
    </location>
</feature>
<accession>A3CPQ6</accession>
<comment type="function">
    <text evidence="1">Participates in chromosomal partition during cell division. May act via the formation of a condensin-like complex containing Smc and ScpA that pull DNA away from mid-cell into both cell halves.</text>
</comment>
<comment type="subunit">
    <text evidence="1">Homodimer. Homodimerization may be required to stabilize the binding of ScpA to the Smc head domains. Component of a cohesin-like complex composed of ScpA, ScpB and the Smc homodimer, in which ScpA and ScpB bind to the head domain of Smc. The presence of the three proteins is required for the association of the complex with DNA.</text>
</comment>
<comment type="subcellular location">
    <subcellularLocation>
        <location evidence="1">Cytoplasm</location>
    </subcellularLocation>
    <text evidence="1">Associated with two foci at the outer edges of the nucleoid region in young cells, and at four foci within both cell halves in older cells.</text>
</comment>
<comment type="similarity">
    <text evidence="1">Belongs to the ScpB family.</text>
</comment>
<organism>
    <name type="scientific">Streptococcus sanguinis (strain SK36)</name>
    <dbReference type="NCBI Taxonomy" id="388919"/>
    <lineage>
        <taxon>Bacteria</taxon>
        <taxon>Bacillati</taxon>
        <taxon>Bacillota</taxon>
        <taxon>Bacilli</taxon>
        <taxon>Lactobacillales</taxon>
        <taxon>Streptococcaceae</taxon>
        <taxon>Streptococcus</taxon>
    </lineage>
</organism>
<evidence type="ECO:0000255" key="1">
    <source>
        <dbReference type="HAMAP-Rule" id="MF_01804"/>
    </source>
</evidence>
<gene>
    <name evidence="1" type="primary">scpB</name>
    <name type="ordered locus">SSA_1778</name>
</gene>
<name>SCPB_STRSV</name>
<proteinExistence type="inferred from homology"/>
<dbReference type="EMBL" id="CP000387">
    <property type="protein sequence ID" value="ABN45161.1"/>
    <property type="molecule type" value="Genomic_DNA"/>
</dbReference>
<dbReference type="RefSeq" id="WP_011837355.1">
    <property type="nucleotide sequence ID" value="NC_009009.1"/>
</dbReference>
<dbReference type="RefSeq" id="YP_001035711.1">
    <property type="nucleotide sequence ID" value="NC_009009.1"/>
</dbReference>
<dbReference type="SMR" id="A3CPQ6"/>
<dbReference type="STRING" id="388919.SSA_1778"/>
<dbReference type="KEGG" id="ssa:SSA_1778"/>
<dbReference type="PATRIC" id="fig|388919.9.peg.1686"/>
<dbReference type="eggNOG" id="COG1386">
    <property type="taxonomic scope" value="Bacteria"/>
</dbReference>
<dbReference type="HOGENOM" id="CLU_045647_5_3_9"/>
<dbReference type="OrthoDB" id="9806226at2"/>
<dbReference type="Proteomes" id="UP000002148">
    <property type="component" value="Chromosome"/>
</dbReference>
<dbReference type="GO" id="GO:0005737">
    <property type="term" value="C:cytoplasm"/>
    <property type="evidence" value="ECO:0007669"/>
    <property type="project" value="UniProtKB-SubCell"/>
</dbReference>
<dbReference type="GO" id="GO:0051301">
    <property type="term" value="P:cell division"/>
    <property type="evidence" value="ECO:0007669"/>
    <property type="project" value="UniProtKB-KW"/>
</dbReference>
<dbReference type="GO" id="GO:0051304">
    <property type="term" value="P:chromosome separation"/>
    <property type="evidence" value="ECO:0007669"/>
    <property type="project" value="InterPro"/>
</dbReference>
<dbReference type="GO" id="GO:0006260">
    <property type="term" value="P:DNA replication"/>
    <property type="evidence" value="ECO:0007669"/>
    <property type="project" value="UniProtKB-UniRule"/>
</dbReference>
<dbReference type="Gene3D" id="1.10.10.10">
    <property type="entry name" value="Winged helix-like DNA-binding domain superfamily/Winged helix DNA-binding domain"/>
    <property type="match status" value="2"/>
</dbReference>
<dbReference type="HAMAP" id="MF_01804">
    <property type="entry name" value="ScpB"/>
    <property type="match status" value="1"/>
</dbReference>
<dbReference type="InterPro" id="IPR005234">
    <property type="entry name" value="ScpB_csome_segregation"/>
</dbReference>
<dbReference type="InterPro" id="IPR036388">
    <property type="entry name" value="WH-like_DNA-bd_sf"/>
</dbReference>
<dbReference type="InterPro" id="IPR036390">
    <property type="entry name" value="WH_DNA-bd_sf"/>
</dbReference>
<dbReference type="NCBIfam" id="TIGR00281">
    <property type="entry name" value="SMC-Scp complex subunit ScpB"/>
    <property type="match status" value="1"/>
</dbReference>
<dbReference type="PANTHER" id="PTHR34298">
    <property type="entry name" value="SEGREGATION AND CONDENSATION PROTEIN B"/>
    <property type="match status" value="1"/>
</dbReference>
<dbReference type="PANTHER" id="PTHR34298:SF2">
    <property type="entry name" value="SEGREGATION AND CONDENSATION PROTEIN B"/>
    <property type="match status" value="1"/>
</dbReference>
<dbReference type="Pfam" id="PF04079">
    <property type="entry name" value="SMC_ScpB"/>
    <property type="match status" value="1"/>
</dbReference>
<dbReference type="PIRSF" id="PIRSF019345">
    <property type="entry name" value="ScpB"/>
    <property type="match status" value="1"/>
</dbReference>
<dbReference type="SUPFAM" id="SSF46785">
    <property type="entry name" value="Winged helix' DNA-binding domain"/>
    <property type="match status" value="2"/>
</dbReference>